<feature type="chain" id="PRO_1000120727" description="Small ribosomal subunit protein bS6">
    <location>
        <begin position="1"/>
        <end position="112"/>
    </location>
</feature>
<evidence type="ECO:0000255" key="1">
    <source>
        <dbReference type="HAMAP-Rule" id="MF_00360"/>
    </source>
</evidence>
<evidence type="ECO:0000305" key="2"/>
<keyword id="KW-0687">Ribonucleoprotein</keyword>
<keyword id="KW-0689">Ribosomal protein</keyword>
<keyword id="KW-0694">RNA-binding</keyword>
<keyword id="KW-0699">rRNA-binding</keyword>
<comment type="function">
    <text evidence="1">Binds together with bS18 to 16S ribosomal RNA.</text>
</comment>
<comment type="similarity">
    <text evidence="1">Belongs to the bacterial ribosomal protein bS6 family.</text>
</comment>
<proteinExistence type="inferred from homology"/>
<accession>B0BAQ7</accession>
<gene>
    <name evidence="1" type="primary">rpsF</name>
    <name type="ordered locus">CTLon_0171</name>
</gene>
<name>RS6_CHLTB</name>
<sequence>MKKKTGQLYEGAYVFSVTLSEDARRKALEKVTSGITNYGGEVLKIHDQGRKKLAYTIRGAREGYYYFIYFTVAPEAIAELWREYHLNEDLLRFMTLKASAVKEVLEFATLPE</sequence>
<protein>
    <recommendedName>
        <fullName evidence="1">Small ribosomal subunit protein bS6</fullName>
    </recommendedName>
    <alternativeName>
        <fullName evidence="2">30S ribosomal protein S6</fullName>
    </alternativeName>
</protein>
<dbReference type="EMBL" id="AM884177">
    <property type="protein sequence ID" value="CAP06569.1"/>
    <property type="molecule type" value="Genomic_DNA"/>
</dbReference>
<dbReference type="RefSeq" id="WP_009872183.1">
    <property type="nucleotide sequence ID" value="NC_010280.2"/>
</dbReference>
<dbReference type="SMR" id="B0BAQ7"/>
<dbReference type="KEGG" id="ctl:CTLon_0171"/>
<dbReference type="HOGENOM" id="CLU_113441_5_2_0"/>
<dbReference type="Proteomes" id="UP001154401">
    <property type="component" value="Chromosome"/>
</dbReference>
<dbReference type="GO" id="GO:0005737">
    <property type="term" value="C:cytoplasm"/>
    <property type="evidence" value="ECO:0007669"/>
    <property type="project" value="UniProtKB-ARBA"/>
</dbReference>
<dbReference type="GO" id="GO:1990904">
    <property type="term" value="C:ribonucleoprotein complex"/>
    <property type="evidence" value="ECO:0007669"/>
    <property type="project" value="UniProtKB-KW"/>
</dbReference>
<dbReference type="GO" id="GO:0005840">
    <property type="term" value="C:ribosome"/>
    <property type="evidence" value="ECO:0007669"/>
    <property type="project" value="UniProtKB-KW"/>
</dbReference>
<dbReference type="GO" id="GO:0070181">
    <property type="term" value="F:small ribosomal subunit rRNA binding"/>
    <property type="evidence" value="ECO:0007669"/>
    <property type="project" value="TreeGrafter"/>
</dbReference>
<dbReference type="GO" id="GO:0003735">
    <property type="term" value="F:structural constituent of ribosome"/>
    <property type="evidence" value="ECO:0007669"/>
    <property type="project" value="InterPro"/>
</dbReference>
<dbReference type="GO" id="GO:0006412">
    <property type="term" value="P:translation"/>
    <property type="evidence" value="ECO:0007669"/>
    <property type="project" value="UniProtKB-UniRule"/>
</dbReference>
<dbReference type="CDD" id="cd00473">
    <property type="entry name" value="bS6"/>
    <property type="match status" value="1"/>
</dbReference>
<dbReference type="Gene3D" id="3.30.70.60">
    <property type="match status" value="1"/>
</dbReference>
<dbReference type="HAMAP" id="MF_00360">
    <property type="entry name" value="Ribosomal_bS6"/>
    <property type="match status" value="1"/>
</dbReference>
<dbReference type="InterPro" id="IPR000529">
    <property type="entry name" value="Ribosomal_bS6"/>
</dbReference>
<dbReference type="InterPro" id="IPR035980">
    <property type="entry name" value="Ribosomal_bS6_sf"/>
</dbReference>
<dbReference type="InterPro" id="IPR020814">
    <property type="entry name" value="Ribosomal_S6_plastid/chlpt"/>
</dbReference>
<dbReference type="InterPro" id="IPR014717">
    <property type="entry name" value="Transl_elong_EF1B/ribsomal_bS6"/>
</dbReference>
<dbReference type="NCBIfam" id="TIGR00166">
    <property type="entry name" value="S6"/>
    <property type="match status" value="1"/>
</dbReference>
<dbReference type="PANTHER" id="PTHR21011">
    <property type="entry name" value="MITOCHONDRIAL 28S RIBOSOMAL PROTEIN S6"/>
    <property type="match status" value="1"/>
</dbReference>
<dbReference type="PANTHER" id="PTHR21011:SF1">
    <property type="entry name" value="SMALL RIBOSOMAL SUBUNIT PROTEIN BS6M"/>
    <property type="match status" value="1"/>
</dbReference>
<dbReference type="Pfam" id="PF01250">
    <property type="entry name" value="Ribosomal_S6"/>
    <property type="match status" value="1"/>
</dbReference>
<dbReference type="SUPFAM" id="SSF54995">
    <property type="entry name" value="Ribosomal protein S6"/>
    <property type="match status" value="1"/>
</dbReference>
<organism>
    <name type="scientific">Chlamydia trachomatis serovar L2b (strain UCH-1/proctitis)</name>
    <dbReference type="NCBI Taxonomy" id="471473"/>
    <lineage>
        <taxon>Bacteria</taxon>
        <taxon>Pseudomonadati</taxon>
        <taxon>Chlamydiota</taxon>
        <taxon>Chlamydiia</taxon>
        <taxon>Chlamydiales</taxon>
        <taxon>Chlamydiaceae</taxon>
        <taxon>Chlamydia/Chlamydophila group</taxon>
        <taxon>Chlamydia</taxon>
    </lineage>
</organism>
<reference key="1">
    <citation type="journal article" date="2008" name="Genome Res.">
        <title>Chlamydia trachomatis: genome sequence analysis of lymphogranuloma venereum isolates.</title>
        <authorList>
            <person name="Thomson N.R."/>
            <person name="Holden M.T.G."/>
            <person name="Carder C."/>
            <person name="Lennard N."/>
            <person name="Lockey S.J."/>
            <person name="Marsh P."/>
            <person name="Skipp P."/>
            <person name="O'Connor C.D."/>
            <person name="Goodhead I."/>
            <person name="Norbertzcak H."/>
            <person name="Harris B."/>
            <person name="Ormond D."/>
            <person name="Rance R."/>
            <person name="Quail M.A."/>
            <person name="Parkhill J."/>
            <person name="Stephens R.S."/>
            <person name="Clarke I.N."/>
        </authorList>
    </citation>
    <scope>NUCLEOTIDE SEQUENCE [LARGE SCALE GENOMIC DNA]</scope>
    <source>
        <strain>UCH-1/proctitis</strain>
    </source>
</reference>